<gene>
    <name evidence="1" type="primary">kdpB2</name>
    <name type="ordered locus">SAV2076</name>
</gene>
<reference key="1">
    <citation type="journal article" date="2001" name="Lancet">
        <title>Whole genome sequencing of meticillin-resistant Staphylococcus aureus.</title>
        <authorList>
            <person name="Kuroda M."/>
            <person name="Ohta T."/>
            <person name="Uchiyama I."/>
            <person name="Baba T."/>
            <person name="Yuzawa H."/>
            <person name="Kobayashi I."/>
            <person name="Cui L."/>
            <person name="Oguchi A."/>
            <person name="Aoki K."/>
            <person name="Nagai Y."/>
            <person name="Lian J.-Q."/>
            <person name="Ito T."/>
            <person name="Kanamori M."/>
            <person name="Matsumaru H."/>
            <person name="Maruyama A."/>
            <person name="Murakami H."/>
            <person name="Hosoyama A."/>
            <person name="Mizutani-Ui Y."/>
            <person name="Takahashi N.K."/>
            <person name="Sawano T."/>
            <person name="Inoue R."/>
            <person name="Kaito C."/>
            <person name="Sekimizu K."/>
            <person name="Hirakawa H."/>
            <person name="Kuhara S."/>
            <person name="Goto S."/>
            <person name="Yabuzaki J."/>
            <person name="Kanehisa M."/>
            <person name="Yamashita A."/>
            <person name="Oshima K."/>
            <person name="Furuya K."/>
            <person name="Yoshino C."/>
            <person name="Shiba T."/>
            <person name="Hattori M."/>
            <person name="Ogasawara N."/>
            <person name="Hayashi H."/>
            <person name="Hiramatsu K."/>
        </authorList>
    </citation>
    <scope>NUCLEOTIDE SEQUENCE [LARGE SCALE GENOMIC DNA]</scope>
    <source>
        <strain>Mu50 / ATCC 700699</strain>
    </source>
</reference>
<accession>P63683</accession>
<accession>Q99SI0</accession>
<name>KDPB2_STAAM</name>
<comment type="function">
    <text evidence="1">Part of the high-affinity ATP-driven potassium transport (or Kdp) system, which catalyzes the hydrolysis of ATP coupled with the electrogenic transport of potassium into the cytoplasm. This subunit is responsible for energy coupling to the transport system and for the release of the potassium ions to the cytoplasm.</text>
</comment>
<comment type="catalytic activity">
    <reaction evidence="1">
        <text>K(+)(out) + ATP + H2O = K(+)(in) + ADP + phosphate + H(+)</text>
        <dbReference type="Rhea" id="RHEA:16777"/>
        <dbReference type="ChEBI" id="CHEBI:15377"/>
        <dbReference type="ChEBI" id="CHEBI:15378"/>
        <dbReference type="ChEBI" id="CHEBI:29103"/>
        <dbReference type="ChEBI" id="CHEBI:30616"/>
        <dbReference type="ChEBI" id="CHEBI:43474"/>
        <dbReference type="ChEBI" id="CHEBI:456216"/>
        <dbReference type="EC" id="7.2.2.6"/>
    </reaction>
    <physiologicalReaction direction="left-to-right" evidence="1">
        <dbReference type="Rhea" id="RHEA:16778"/>
    </physiologicalReaction>
</comment>
<comment type="subunit">
    <text evidence="1">The system is composed of three essential subunits: KdpA, KdpB and KdpC.</text>
</comment>
<comment type="subcellular location">
    <subcellularLocation>
        <location evidence="1">Cell membrane</location>
        <topology evidence="1">Multi-pass membrane protein</topology>
    </subcellularLocation>
</comment>
<comment type="similarity">
    <text evidence="1">Belongs to the cation transport ATPase (P-type) (TC 3.A.3) family. Type IA subfamily.</text>
</comment>
<feature type="chain" id="PRO_0000046136" description="Potassium-transporting ATPase ATP-binding subunit 2">
    <location>
        <begin position="1"/>
        <end position="675"/>
    </location>
</feature>
<feature type="transmembrane region" description="Helical" evidence="1">
    <location>
        <begin position="34"/>
        <end position="54"/>
    </location>
</feature>
<feature type="transmembrane region" description="Helical" evidence="1">
    <location>
        <begin position="65"/>
        <end position="85"/>
    </location>
</feature>
<feature type="transmembrane region" description="Helical" evidence="1">
    <location>
        <begin position="216"/>
        <end position="236"/>
    </location>
</feature>
<feature type="transmembrane region" description="Helical" evidence="1">
    <location>
        <begin position="245"/>
        <end position="265"/>
    </location>
</feature>
<feature type="transmembrane region" description="Helical" evidence="1">
    <location>
        <begin position="569"/>
        <end position="591"/>
    </location>
</feature>
<feature type="transmembrane region" description="Helical" evidence="1">
    <location>
        <begin position="611"/>
        <end position="631"/>
    </location>
</feature>
<feature type="transmembrane region" description="Helical" evidence="1">
    <location>
        <begin position="644"/>
        <end position="664"/>
    </location>
</feature>
<feature type="active site" description="4-aspartylphosphate intermediate" evidence="1">
    <location>
        <position position="304"/>
    </location>
</feature>
<feature type="binding site" evidence="1">
    <location>
        <position position="341"/>
    </location>
    <ligand>
        <name>ATP</name>
        <dbReference type="ChEBI" id="CHEBI:30616"/>
    </ligand>
</feature>
<feature type="binding site" evidence="1">
    <location>
        <position position="345"/>
    </location>
    <ligand>
        <name>ATP</name>
        <dbReference type="ChEBI" id="CHEBI:30616"/>
    </ligand>
</feature>
<feature type="binding site" evidence="1">
    <location>
        <begin position="372"/>
        <end position="379"/>
    </location>
    <ligand>
        <name>ATP</name>
        <dbReference type="ChEBI" id="CHEBI:30616"/>
    </ligand>
</feature>
<feature type="binding site" evidence="1">
    <location>
        <position position="390"/>
    </location>
    <ligand>
        <name>ATP</name>
        <dbReference type="ChEBI" id="CHEBI:30616"/>
    </ligand>
</feature>
<feature type="binding site" evidence="1">
    <location>
        <position position="513"/>
    </location>
    <ligand>
        <name>Mg(2+)</name>
        <dbReference type="ChEBI" id="CHEBI:18420"/>
    </ligand>
</feature>
<feature type="binding site" evidence="1">
    <location>
        <position position="517"/>
    </location>
    <ligand>
        <name>Mg(2+)</name>
        <dbReference type="ChEBI" id="CHEBI:18420"/>
    </ligand>
</feature>
<protein>
    <recommendedName>
        <fullName evidence="1">Potassium-transporting ATPase ATP-binding subunit 2</fullName>
        <ecNumber evidence="1">7.2.2.6</ecNumber>
    </recommendedName>
    <alternativeName>
        <fullName evidence="1">ATP phosphohydrolase [potassium-transporting] B chain 2</fullName>
    </alternativeName>
    <alternativeName>
        <fullName evidence="1">Potassium-binding and translocating subunit B 2</fullName>
    </alternativeName>
    <alternativeName>
        <fullName evidence="1">Potassium-translocating ATPase B chain 2</fullName>
    </alternativeName>
</protein>
<sequence>MHHVNKYFNQTMVIEALKMSFYKLNPKQLIKNPIMFVVEVGMVLTLILICFPDIFGTSYLSRGYLITIFIILLITILFANFSEAFAEGRGKAQADSLRQAQSNLTARLIEENGAYRIVNATELKAGQNIRVENGETIPADGVVINGLATVDESAITGESAPVIKESGGDFDGVIGGTLVTSDWLEIRVESEAGTSFLDKMIALVEGAERNKTPNEIALFTLLTTLTIIFLVVIVTLYPIASYLHLILPIAMLIALTVCLIPTTIGGLLSAIGIAGMDRVTQFNVLAKSGRAVEVCGDVDVMILDKTGTITYGNRIASEFLPVNQQMLEKLIVAAYMSSIYDDTPEGKSIVRLAKQMYINELPKDIDGTYKPFTAETRMSGIITNEISVFKGAPNSMINLVKQQQGNIPLNIESLCMDVSSKGGTPLIVIENNVMLGVIYLKDVIKDGLVERFTELRKMGIETVMCTGDNALTAATIAKEAGVDRFVAECKPEDKIKVIKDEQAKGHIVAMTGDGTNDAPALAQANIGLAMNSGTISAKEAANLIDLDSNPTKLIEVVKIGKQLLMTRGALTTFSLANDVAKYFAILPALMMSTIPEMTSLNIMHLSSPKSAIISALIFNALIIVALIPIAMKGVKVKGYSIDRIFINNMLIYGLGGLIVPFLGIKLIDMIVQFFV</sequence>
<dbReference type="EC" id="7.2.2.6" evidence="1"/>
<dbReference type="EMBL" id="BA000017">
    <property type="protein sequence ID" value="BAB58238.1"/>
    <property type="molecule type" value="Genomic_DNA"/>
</dbReference>
<dbReference type="SMR" id="P63683"/>
<dbReference type="KEGG" id="sav:SAV2076"/>
<dbReference type="HOGENOM" id="CLU_025728_2_0_9"/>
<dbReference type="PhylomeDB" id="P63683"/>
<dbReference type="Proteomes" id="UP000002481">
    <property type="component" value="Chromosome"/>
</dbReference>
<dbReference type="GO" id="GO:0005886">
    <property type="term" value="C:plasma membrane"/>
    <property type="evidence" value="ECO:0007669"/>
    <property type="project" value="UniProtKB-SubCell"/>
</dbReference>
<dbReference type="GO" id="GO:0005524">
    <property type="term" value="F:ATP binding"/>
    <property type="evidence" value="ECO:0007669"/>
    <property type="project" value="UniProtKB-UniRule"/>
</dbReference>
<dbReference type="GO" id="GO:0016887">
    <property type="term" value="F:ATP hydrolysis activity"/>
    <property type="evidence" value="ECO:0007669"/>
    <property type="project" value="InterPro"/>
</dbReference>
<dbReference type="GO" id="GO:0000287">
    <property type="term" value="F:magnesium ion binding"/>
    <property type="evidence" value="ECO:0007669"/>
    <property type="project" value="UniProtKB-UniRule"/>
</dbReference>
<dbReference type="GO" id="GO:0008556">
    <property type="term" value="F:P-type potassium transmembrane transporter activity"/>
    <property type="evidence" value="ECO:0007669"/>
    <property type="project" value="UniProtKB-UniRule"/>
</dbReference>
<dbReference type="FunFam" id="2.70.150.10:FF:000010">
    <property type="entry name" value="Potassium-transporting ATPase ATP-binding subunit"/>
    <property type="match status" value="1"/>
</dbReference>
<dbReference type="FunFam" id="3.40.1110.10:FF:000007">
    <property type="entry name" value="Potassium-transporting ATPase ATP-binding subunit"/>
    <property type="match status" value="1"/>
</dbReference>
<dbReference type="Gene3D" id="3.40.1110.10">
    <property type="entry name" value="Calcium-transporting ATPase, cytoplasmic domain N"/>
    <property type="match status" value="1"/>
</dbReference>
<dbReference type="Gene3D" id="2.70.150.10">
    <property type="entry name" value="Calcium-transporting ATPase, cytoplasmic transduction domain A"/>
    <property type="match status" value="1"/>
</dbReference>
<dbReference type="Gene3D" id="3.40.50.1000">
    <property type="entry name" value="HAD superfamily/HAD-like"/>
    <property type="match status" value="1"/>
</dbReference>
<dbReference type="HAMAP" id="MF_00285">
    <property type="entry name" value="KdpB"/>
    <property type="match status" value="1"/>
</dbReference>
<dbReference type="InterPro" id="IPR023299">
    <property type="entry name" value="ATPase_P-typ_cyto_dom_N"/>
</dbReference>
<dbReference type="InterPro" id="IPR018303">
    <property type="entry name" value="ATPase_P-typ_P_site"/>
</dbReference>
<dbReference type="InterPro" id="IPR023298">
    <property type="entry name" value="ATPase_P-typ_TM_dom_sf"/>
</dbReference>
<dbReference type="InterPro" id="IPR008250">
    <property type="entry name" value="ATPase_P-typ_transduc_dom_A_sf"/>
</dbReference>
<dbReference type="InterPro" id="IPR036412">
    <property type="entry name" value="HAD-like_sf"/>
</dbReference>
<dbReference type="InterPro" id="IPR023214">
    <property type="entry name" value="HAD_sf"/>
</dbReference>
<dbReference type="InterPro" id="IPR006391">
    <property type="entry name" value="P-type_ATPase_bsu_IA"/>
</dbReference>
<dbReference type="InterPro" id="IPR001757">
    <property type="entry name" value="P_typ_ATPase"/>
</dbReference>
<dbReference type="InterPro" id="IPR044492">
    <property type="entry name" value="P_typ_ATPase_HD_dom"/>
</dbReference>
<dbReference type="NCBIfam" id="TIGR01494">
    <property type="entry name" value="ATPase_P-type"/>
    <property type="match status" value="2"/>
</dbReference>
<dbReference type="NCBIfam" id="TIGR01497">
    <property type="entry name" value="kdpB"/>
    <property type="match status" value="1"/>
</dbReference>
<dbReference type="PANTHER" id="PTHR43743">
    <property type="entry name" value="POTASSIUM-TRANSPORTING ATPASE ATP-BINDING SUBUNIT"/>
    <property type="match status" value="1"/>
</dbReference>
<dbReference type="PANTHER" id="PTHR43743:SF1">
    <property type="entry name" value="POTASSIUM-TRANSPORTING ATPASE ATP-BINDING SUBUNIT"/>
    <property type="match status" value="1"/>
</dbReference>
<dbReference type="Pfam" id="PF00122">
    <property type="entry name" value="E1-E2_ATPase"/>
    <property type="match status" value="1"/>
</dbReference>
<dbReference type="Pfam" id="PF00702">
    <property type="entry name" value="Hydrolase"/>
    <property type="match status" value="1"/>
</dbReference>
<dbReference type="PRINTS" id="PR00119">
    <property type="entry name" value="CATATPASE"/>
</dbReference>
<dbReference type="SFLD" id="SFLDG00002">
    <property type="entry name" value="C1.7:_P-type_atpase_like"/>
    <property type="match status" value="1"/>
</dbReference>
<dbReference type="SFLD" id="SFLDF00027">
    <property type="entry name" value="p-type_atpase"/>
    <property type="match status" value="1"/>
</dbReference>
<dbReference type="SUPFAM" id="SSF81653">
    <property type="entry name" value="Calcium ATPase, transduction domain A"/>
    <property type="match status" value="1"/>
</dbReference>
<dbReference type="SUPFAM" id="SSF81665">
    <property type="entry name" value="Calcium ATPase, transmembrane domain M"/>
    <property type="match status" value="1"/>
</dbReference>
<dbReference type="SUPFAM" id="SSF56784">
    <property type="entry name" value="HAD-like"/>
    <property type="match status" value="1"/>
</dbReference>
<dbReference type="PROSITE" id="PS00154">
    <property type="entry name" value="ATPASE_E1_E2"/>
    <property type="match status" value="1"/>
</dbReference>
<organism>
    <name type="scientific">Staphylococcus aureus (strain Mu50 / ATCC 700699)</name>
    <dbReference type="NCBI Taxonomy" id="158878"/>
    <lineage>
        <taxon>Bacteria</taxon>
        <taxon>Bacillati</taxon>
        <taxon>Bacillota</taxon>
        <taxon>Bacilli</taxon>
        <taxon>Bacillales</taxon>
        <taxon>Staphylococcaceae</taxon>
        <taxon>Staphylococcus</taxon>
    </lineage>
</organism>
<proteinExistence type="inferred from homology"/>
<evidence type="ECO:0000255" key="1">
    <source>
        <dbReference type="HAMAP-Rule" id="MF_00285"/>
    </source>
</evidence>
<keyword id="KW-0067">ATP-binding</keyword>
<keyword id="KW-1003">Cell membrane</keyword>
<keyword id="KW-0406">Ion transport</keyword>
<keyword id="KW-0460">Magnesium</keyword>
<keyword id="KW-0472">Membrane</keyword>
<keyword id="KW-0479">Metal-binding</keyword>
<keyword id="KW-0547">Nucleotide-binding</keyword>
<keyword id="KW-0597">Phosphoprotein</keyword>
<keyword id="KW-0630">Potassium</keyword>
<keyword id="KW-0633">Potassium transport</keyword>
<keyword id="KW-1278">Translocase</keyword>
<keyword id="KW-0812">Transmembrane</keyword>
<keyword id="KW-1133">Transmembrane helix</keyword>
<keyword id="KW-0813">Transport</keyword>